<dbReference type="EC" id="6.3.4.20" evidence="1"/>
<dbReference type="EMBL" id="CP000703">
    <property type="protein sequence ID" value="ABQ48539.1"/>
    <property type="molecule type" value="Genomic_DNA"/>
</dbReference>
<dbReference type="RefSeq" id="WP_000446724.1">
    <property type="nucleotide sequence ID" value="NC_009487.1"/>
</dbReference>
<dbReference type="SMR" id="A5IQR6"/>
<dbReference type="KEGG" id="saj:SaurJH9_0736"/>
<dbReference type="HOGENOM" id="CLU_081854_0_0_9"/>
<dbReference type="UniPathway" id="UPA00391"/>
<dbReference type="GO" id="GO:0005524">
    <property type="term" value="F:ATP binding"/>
    <property type="evidence" value="ECO:0007669"/>
    <property type="project" value="UniProtKB-UniRule"/>
</dbReference>
<dbReference type="GO" id="GO:0016879">
    <property type="term" value="F:ligase activity, forming carbon-nitrogen bonds"/>
    <property type="evidence" value="ECO:0007669"/>
    <property type="project" value="UniProtKB-UniRule"/>
</dbReference>
<dbReference type="GO" id="GO:0008270">
    <property type="term" value="F:zinc ion binding"/>
    <property type="evidence" value="ECO:0007669"/>
    <property type="project" value="UniProtKB-UniRule"/>
</dbReference>
<dbReference type="GO" id="GO:0008616">
    <property type="term" value="P:queuosine biosynthetic process"/>
    <property type="evidence" value="ECO:0007669"/>
    <property type="project" value="UniProtKB-UniRule"/>
</dbReference>
<dbReference type="CDD" id="cd01995">
    <property type="entry name" value="QueC-like"/>
    <property type="match status" value="1"/>
</dbReference>
<dbReference type="FunFam" id="3.40.50.620:FF:000017">
    <property type="entry name" value="7-cyano-7-deazaguanine synthase"/>
    <property type="match status" value="1"/>
</dbReference>
<dbReference type="Gene3D" id="3.40.50.620">
    <property type="entry name" value="HUPs"/>
    <property type="match status" value="1"/>
</dbReference>
<dbReference type="HAMAP" id="MF_01633">
    <property type="entry name" value="QueC"/>
    <property type="match status" value="1"/>
</dbReference>
<dbReference type="InterPro" id="IPR018317">
    <property type="entry name" value="QueC"/>
</dbReference>
<dbReference type="InterPro" id="IPR014729">
    <property type="entry name" value="Rossmann-like_a/b/a_fold"/>
</dbReference>
<dbReference type="NCBIfam" id="TIGR00364">
    <property type="entry name" value="7-cyano-7-deazaguanine synthase QueC"/>
    <property type="match status" value="1"/>
</dbReference>
<dbReference type="PANTHER" id="PTHR42914">
    <property type="entry name" value="7-CYANO-7-DEAZAGUANINE SYNTHASE"/>
    <property type="match status" value="1"/>
</dbReference>
<dbReference type="PANTHER" id="PTHR42914:SF1">
    <property type="entry name" value="7-CYANO-7-DEAZAGUANINE SYNTHASE"/>
    <property type="match status" value="1"/>
</dbReference>
<dbReference type="Pfam" id="PF06508">
    <property type="entry name" value="QueC"/>
    <property type="match status" value="1"/>
</dbReference>
<dbReference type="PIRSF" id="PIRSF006293">
    <property type="entry name" value="ExsB"/>
    <property type="match status" value="1"/>
</dbReference>
<dbReference type="SUPFAM" id="SSF52402">
    <property type="entry name" value="Adenine nucleotide alpha hydrolases-like"/>
    <property type="match status" value="1"/>
</dbReference>
<organism>
    <name type="scientific">Staphylococcus aureus (strain JH9)</name>
    <dbReference type="NCBI Taxonomy" id="359786"/>
    <lineage>
        <taxon>Bacteria</taxon>
        <taxon>Bacillati</taxon>
        <taxon>Bacillota</taxon>
        <taxon>Bacilli</taxon>
        <taxon>Bacillales</taxon>
        <taxon>Staphylococcaceae</taxon>
        <taxon>Staphylococcus</taxon>
    </lineage>
</organism>
<evidence type="ECO:0000255" key="1">
    <source>
        <dbReference type="HAMAP-Rule" id="MF_01633"/>
    </source>
</evidence>
<sequence>MESVLNNEKAIVVFSGGQDSTTCLFYAKKHFKEVELVTFNYGQRHDTEIEVAKQIAQDQGMKHHVLDMSLLSQLTPNALTQHDMEITNNEDGIPNTFVPARNLLFLSFAGALAYQIGAKHIITGVCETDFSGYPDCRDSFIKSMNVTLSLAMDKDFVIHTPLMWLNKAETWKLSDELEVLDYIRTKTLTCYNGIIGDGCGECPACHLRQRGLNQYLESKGAL</sequence>
<accession>A5IQR6</accession>
<keyword id="KW-0067">ATP-binding</keyword>
<keyword id="KW-0436">Ligase</keyword>
<keyword id="KW-0479">Metal-binding</keyword>
<keyword id="KW-0547">Nucleotide-binding</keyword>
<keyword id="KW-0671">Queuosine biosynthesis</keyword>
<keyword id="KW-0862">Zinc</keyword>
<reference key="1">
    <citation type="submission" date="2007-05" db="EMBL/GenBank/DDBJ databases">
        <title>Complete sequence of chromosome of Staphylococcus aureus subsp. aureus JH9.</title>
        <authorList>
            <consortium name="US DOE Joint Genome Institute"/>
            <person name="Copeland A."/>
            <person name="Lucas S."/>
            <person name="Lapidus A."/>
            <person name="Barry K."/>
            <person name="Detter J.C."/>
            <person name="Glavina del Rio T."/>
            <person name="Hammon N."/>
            <person name="Israni S."/>
            <person name="Pitluck S."/>
            <person name="Chain P."/>
            <person name="Malfatti S."/>
            <person name="Shin M."/>
            <person name="Vergez L."/>
            <person name="Schmutz J."/>
            <person name="Larimer F."/>
            <person name="Land M."/>
            <person name="Hauser L."/>
            <person name="Kyrpides N."/>
            <person name="Kim E."/>
            <person name="Tomasz A."/>
            <person name="Richardson P."/>
        </authorList>
    </citation>
    <scope>NUCLEOTIDE SEQUENCE [LARGE SCALE GENOMIC DNA]</scope>
    <source>
        <strain>JH9</strain>
    </source>
</reference>
<name>QUEC_STAA9</name>
<protein>
    <recommendedName>
        <fullName evidence="1">7-cyano-7-deazaguanine synthase</fullName>
        <ecNumber evidence="1">6.3.4.20</ecNumber>
    </recommendedName>
    <alternativeName>
        <fullName evidence="1">7-cyano-7-carbaguanine synthase</fullName>
    </alternativeName>
    <alternativeName>
        <fullName evidence="1">PreQ(0) synthase</fullName>
    </alternativeName>
    <alternativeName>
        <fullName evidence="1">Queuosine biosynthesis protein QueC</fullName>
    </alternativeName>
</protein>
<proteinExistence type="inferred from homology"/>
<feature type="chain" id="PRO_0000336954" description="7-cyano-7-deazaguanine synthase">
    <location>
        <begin position="1"/>
        <end position="222"/>
    </location>
</feature>
<feature type="binding site" evidence="1">
    <location>
        <begin position="14"/>
        <end position="24"/>
    </location>
    <ligand>
        <name>ATP</name>
        <dbReference type="ChEBI" id="CHEBI:30616"/>
    </ligand>
</feature>
<feature type="binding site" evidence="1">
    <location>
        <position position="190"/>
    </location>
    <ligand>
        <name>Zn(2+)</name>
        <dbReference type="ChEBI" id="CHEBI:29105"/>
    </ligand>
</feature>
<feature type="binding site" evidence="1">
    <location>
        <position position="199"/>
    </location>
    <ligand>
        <name>Zn(2+)</name>
        <dbReference type="ChEBI" id="CHEBI:29105"/>
    </ligand>
</feature>
<feature type="binding site" evidence="1">
    <location>
        <position position="202"/>
    </location>
    <ligand>
        <name>Zn(2+)</name>
        <dbReference type="ChEBI" id="CHEBI:29105"/>
    </ligand>
</feature>
<feature type="binding site" evidence="1">
    <location>
        <position position="205"/>
    </location>
    <ligand>
        <name>Zn(2+)</name>
        <dbReference type="ChEBI" id="CHEBI:29105"/>
    </ligand>
</feature>
<gene>
    <name evidence="1" type="primary">queC</name>
    <name type="ordered locus">SaurJH9_0736</name>
</gene>
<comment type="function">
    <text evidence="1">Catalyzes the ATP-dependent conversion of 7-carboxy-7-deazaguanine (CDG) to 7-cyano-7-deazaguanine (preQ(0)).</text>
</comment>
<comment type="catalytic activity">
    <reaction evidence="1">
        <text>7-carboxy-7-deazaguanine + NH4(+) + ATP = 7-cyano-7-deazaguanine + ADP + phosphate + H2O + H(+)</text>
        <dbReference type="Rhea" id="RHEA:27982"/>
        <dbReference type="ChEBI" id="CHEBI:15377"/>
        <dbReference type="ChEBI" id="CHEBI:15378"/>
        <dbReference type="ChEBI" id="CHEBI:28938"/>
        <dbReference type="ChEBI" id="CHEBI:30616"/>
        <dbReference type="ChEBI" id="CHEBI:43474"/>
        <dbReference type="ChEBI" id="CHEBI:45075"/>
        <dbReference type="ChEBI" id="CHEBI:61036"/>
        <dbReference type="ChEBI" id="CHEBI:456216"/>
        <dbReference type="EC" id="6.3.4.20"/>
    </reaction>
</comment>
<comment type="cofactor">
    <cofactor evidence="1">
        <name>Zn(2+)</name>
        <dbReference type="ChEBI" id="CHEBI:29105"/>
    </cofactor>
    <text evidence="1">Binds 1 zinc ion per subunit.</text>
</comment>
<comment type="pathway">
    <text evidence="1">Purine metabolism; 7-cyano-7-deazaguanine biosynthesis.</text>
</comment>
<comment type="subunit">
    <text evidence="1">Homodimer.</text>
</comment>
<comment type="similarity">
    <text evidence="1">Belongs to the QueC family.</text>
</comment>